<organism>
    <name type="scientific">Aliivibrio fischeri (strain ATCC 700601 / ES114)</name>
    <name type="common">Vibrio fischeri</name>
    <dbReference type="NCBI Taxonomy" id="312309"/>
    <lineage>
        <taxon>Bacteria</taxon>
        <taxon>Pseudomonadati</taxon>
        <taxon>Pseudomonadota</taxon>
        <taxon>Gammaproteobacteria</taxon>
        <taxon>Vibrionales</taxon>
        <taxon>Vibrionaceae</taxon>
        <taxon>Aliivibrio</taxon>
    </lineage>
</organism>
<gene>
    <name evidence="1" type="primary">lexA</name>
    <name type="ordered locus">VF_2442</name>
</gene>
<dbReference type="EC" id="3.4.21.88" evidence="1"/>
<dbReference type="EMBL" id="CP000020">
    <property type="protein sequence ID" value="AAW86937.1"/>
    <property type="molecule type" value="Genomic_DNA"/>
</dbReference>
<dbReference type="RefSeq" id="WP_005421350.1">
    <property type="nucleotide sequence ID" value="NZ_CAWLES010000001.1"/>
</dbReference>
<dbReference type="RefSeq" id="YP_205825.1">
    <property type="nucleotide sequence ID" value="NC_006840.2"/>
</dbReference>
<dbReference type="SMR" id="Q5E209"/>
<dbReference type="STRING" id="312309.VF_2442"/>
<dbReference type="MEROPS" id="S24.001"/>
<dbReference type="EnsemblBacteria" id="AAW86937">
    <property type="protein sequence ID" value="AAW86937"/>
    <property type="gene ID" value="VF_2442"/>
</dbReference>
<dbReference type="GeneID" id="54165173"/>
<dbReference type="KEGG" id="vfi:VF_2442"/>
<dbReference type="PATRIC" id="fig|312309.11.peg.2470"/>
<dbReference type="eggNOG" id="COG1974">
    <property type="taxonomic scope" value="Bacteria"/>
</dbReference>
<dbReference type="HOGENOM" id="CLU_066192_45_3_6"/>
<dbReference type="OrthoDB" id="9802364at2"/>
<dbReference type="Proteomes" id="UP000000537">
    <property type="component" value="Chromosome I"/>
</dbReference>
<dbReference type="GO" id="GO:0003677">
    <property type="term" value="F:DNA binding"/>
    <property type="evidence" value="ECO:0007669"/>
    <property type="project" value="UniProtKB-UniRule"/>
</dbReference>
<dbReference type="GO" id="GO:0004252">
    <property type="term" value="F:serine-type endopeptidase activity"/>
    <property type="evidence" value="ECO:0007669"/>
    <property type="project" value="UniProtKB-UniRule"/>
</dbReference>
<dbReference type="GO" id="GO:0006281">
    <property type="term" value="P:DNA repair"/>
    <property type="evidence" value="ECO:0007669"/>
    <property type="project" value="UniProtKB-UniRule"/>
</dbReference>
<dbReference type="GO" id="GO:0006260">
    <property type="term" value="P:DNA replication"/>
    <property type="evidence" value="ECO:0007669"/>
    <property type="project" value="UniProtKB-UniRule"/>
</dbReference>
<dbReference type="GO" id="GO:0045892">
    <property type="term" value="P:negative regulation of DNA-templated transcription"/>
    <property type="evidence" value="ECO:0007669"/>
    <property type="project" value="UniProtKB-UniRule"/>
</dbReference>
<dbReference type="GO" id="GO:0006508">
    <property type="term" value="P:proteolysis"/>
    <property type="evidence" value="ECO:0007669"/>
    <property type="project" value="InterPro"/>
</dbReference>
<dbReference type="GO" id="GO:0009432">
    <property type="term" value="P:SOS response"/>
    <property type="evidence" value="ECO:0007669"/>
    <property type="project" value="UniProtKB-UniRule"/>
</dbReference>
<dbReference type="CDD" id="cd06529">
    <property type="entry name" value="S24_LexA-like"/>
    <property type="match status" value="1"/>
</dbReference>
<dbReference type="FunFam" id="1.10.10.10:FF:000009">
    <property type="entry name" value="LexA repressor"/>
    <property type="match status" value="1"/>
</dbReference>
<dbReference type="FunFam" id="2.10.109.10:FF:000001">
    <property type="entry name" value="LexA repressor"/>
    <property type="match status" value="1"/>
</dbReference>
<dbReference type="Gene3D" id="2.10.109.10">
    <property type="entry name" value="Umud Fragment, subunit A"/>
    <property type="match status" value="1"/>
</dbReference>
<dbReference type="Gene3D" id="1.10.10.10">
    <property type="entry name" value="Winged helix-like DNA-binding domain superfamily/Winged helix DNA-binding domain"/>
    <property type="match status" value="1"/>
</dbReference>
<dbReference type="HAMAP" id="MF_00015">
    <property type="entry name" value="LexA"/>
    <property type="match status" value="1"/>
</dbReference>
<dbReference type="InterPro" id="IPR006200">
    <property type="entry name" value="LexA"/>
</dbReference>
<dbReference type="InterPro" id="IPR039418">
    <property type="entry name" value="LexA-like"/>
</dbReference>
<dbReference type="InterPro" id="IPR036286">
    <property type="entry name" value="LexA/Signal_pep-like_sf"/>
</dbReference>
<dbReference type="InterPro" id="IPR006199">
    <property type="entry name" value="LexA_DNA-bd_dom"/>
</dbReference>
<dbReference type="InterPro" id="IPR050077">
    <property type="entry name" value="LexA_repressor"/>
</dbReference>
<dbReference type="InterPro" id="IPR006197">
    <property type="entry name" value="Peptidase_S24_LexA"/>
</dbReference>
<dbReference type="InterPro" id="IPR015927">
    <property type="entry name" value="Peptidase_S24_S26A/B/C"/>
</dbReference>
<dbReference type="InterPro" id="IPR036388">
    <property type="entry name" value="WH-like_DNA-bd_sf"/>
</dbReference>
<dbReference type="InterPro" id="IPR036390">
    <property type="entry name" value="WH_DNA-bd_sf"/>
</dbReference>
<dbReference type="NCBIfam" id="TIGR00498">
    <property type="entry name" value="lexA"/>
    <property type="match status" value="1"/>
</dbReference>
<dbReference type="PANTHER" id="PTHR33516">
    <property type="entry name" value="LEXA REPRESSOR"/>
    <property type="match status" value="1"/>
</dbReference>
<dbReference type="PANTHER" id="PTHR33516:SF2">
    <property type="entry name" value="LEXA REPRESSOR-RELATED"/>
    <property type="match status" value="1"/>
</dbReference>
<dbReference type="Pfam" id="PF01726">
    <property type="entry name" value="LexA_DNA_bind"/>
    <property type="match status" value="1"/>
</dbReference>
<dbReference type="Pfam" id="PF00717">
    <property type="entry name" value="Peptidase_S24"/>
    <property type="match status" value="1"/>
</dbReference>
<dbReference type="PRINTS" id="PR00726">
    <property type="entry name" value="LEXASERPTASE"/>
</dbReference>
<dbReference type="SUPFAM" id="SSF51306">
    <property type="entry name" value="LexA/Signal peptidase"/>
    <property type="match status" value="1"/>
</dbReference>
<dbReference type="SUPFAM" id="SSF46785">
    <property type="entry name" value="Winged helix' DNA-binding domain"/>
    <property type="match status" value="1"/>
</dbReference>
<sequence length="208" mass="22964">MKPLTARQQEVFDLIKAKIDDTGMPPTRAEIARELGFRSANAAEEHLKALARKQVIEIIPGASRGIRILLQDADHHDEELGVPLIGQVAAGEPILAQEHVESHYKVDPGMFKPQADFLLRVNGESMKDIGIMDGDLLAVHKTQDVRDGQVVVARVDDDVTVKRLERKGSMVFLHAENEEFSPIEVDLTSQSLSIEGLAVGVIRSTTWM</sequence>
<evidence type="ECO:0000255" key="1">
    <source>
        <dbReference type="HAMAP-Rule" id="MF_00015"/>
    </source>
</evidence>
<reference key="1">
    <citation type="journal article" date="2005" name="Proc. Natl. Acad. Sci. U.S.A.">
        <title>Complete genome sequence of Vibrio fischeri: a symbiotic bacterium with pathogenic congeners.</title>
        <authorList>
            <person name="Ruby E.G."/>
            <person name="Urbanowski M."/>
            <person name="Campbell J."/>
            <person name="Dunn A."/>
            <person name="Faini M."/>
            <person name="Gunsalus R."/>
            <person name="Lostroh P."/>
            <person name="Lupp C."/>
            <person name="McCann J."/>
            <person name="Millikan D."/>
            <person name="Schaefer A."/>
            <person name="Stabb E."/>
            <person name="Stevens A."/>
            <person name="Visick K."/>
            <person name="Whistler C."/>
            <person name="Greenberg E.P."/>
        </authorList>
    </citation>
    <scope>NUCLEOTIDE SEQUENCE [LARGE SCALE GENOMIC DNA]</scope>
    <source>
        <strain>ATCC 700601 / ES114</strain>
    </source>
</reference>
<accession>Q5E209</accession>
<feature type="chain" id="PRO_0000170101" description="LexA repressor">
    <location>
        <begin position="1"/>
        <end position="208"/>
    </location>
</feature>
<feature type="DNA-binding region" description="H-T-H motif" evidence="1">
    <location>
        <begin position="28"/>
        <end position="48"/>
    </location>
</feature>
<feature type="active site" description="For autocatalytic cleavage activity" evidence="1">
    <location>
        <position position="125"/>
    </location>
</feature>
<feature type="active site" description="For autocatalytic cleavage activity" evidence="1">
    <location>
        <position position="162"/>
    </location>
</feature>
<feature type="site" description="Cleavage; by autolysis" evidence="1">
    <location>
        <begin position="90"/>
        <end position="91"/>
    </location>
</feature>
<comment type="function">
    <text evidence="1">Represses a number of genes involved in the response to DNA damage (SOS response), including recA and lexA. In the presence of single-stranded DNA, RecA interacts with LexA causing an autocatalytic cleavage which disrupts the DNA-binding part of LexA, leading to derepression of the SOS regulon and eventually DNA repair.</text>
</comment>
<comment type="catalytic activity">
    <reaction evidence="1">
        <text>Hydrolysis of Ala-|-Gly bond in repressor LexA.</text>
        <dbReference type="EC" id="3.4.21.88"/>
    </reaction>
</comment>
<comment type="subunit">
    <text evidence="1">Homodimer.</text>
</comment>
<comment type="similarity">
    <text evidence="1">Belongs to the peptidase S24 family.</text>
</comment>
<proteinExistence type="inferred from homology"/>
<name>LEXA_ALIF1</name>
<keyword id="KW-0068">Autocatalytic cleavage</keyword>
<keyword id="KW-0227">DNA damage</keyword>
<keyword id="KW-0234">DNA repair</keyword>
<keyword id="KW-0235">DNA replication</keyword>
<keyword id="KW-0238">DNA-binding</keyword>
<keyword id="KW-0378">Hydrolase</keyword>
<keyword id="KW-1185">Reference proteome</keyword>
<keyword id="KW-0678">Repressor</keyword>
<keyword id="KW-0742">SOS response</keyword>
<keyword id="KW-0804">Transcription</keyword>
<keyword id="KW-0805">Transcription regulation</keyword>
<protein>
    <recommendedName>
        <fullName evidence="1">LexA repressor</fullName>
        <ecNumber evidence="1">3.4.21.88</ecNumber>
    </recommendedName>
</protein>